<evidence type="ECO:0000255" key="1">
    <source>
        <dbReference type="HAMAP-Rule" id="MF_00473"/>
    </source>
</evidence>
<organism>
    <name type="scientific">Escherichia coli O17:K52:H18 (strain UMN026 / ExPEC)</name>
    <dbReference type="NCBI Taxonomy" id="585056"/>
    <lineage>
        <taxon>Bacteria</taxon>
        <taxon>Pseudomonadati</taxon>
        <taxon>Pseudomonadota</taxon>
        <taxon>Gammaproteobacteria</taxon>
        <taxon>Enterobacterales</taxon>
        <taxon>Enterobacteriaceae</taxon>
        <taxon>Escherichia</taxon>
    </lineage>
</organism>
<sequence length="549" mass="61502">MKNINPTQTAAWQALQKHFDEMKDVTIADLFAKDGDRFSKFSATFDDQMLVDYSKNRITEETLAKLQDLAKECDLAGAIKSMFSGEKINRTENRAVLHVALRNRSNTPILVDGKDVMPEVNAVLEKMKTFSEAIISGEWKGYTGKAITDVVNIGIGGSDLGPYMVTEALRPYKNHLNMHFVSNVDGTHIAEVLKKVNSETTLFLVASKTFTTQETMTNAHSARDWFLKAAGDEKHVAKHFAALSTNAKAVGEFGIDTANMFEFWDWVGGRYSLWSAIGLSIVLSIGFDNFVELLSGAHAMDKHFSTTPAEKNLPVLLALIGIWYNNFFGAETEAILPYDQYMHRFAAYFQQGNMESNGKYVDRNGNVVDYQTGPIIWGEPGTNGQHAFYQLIHQGTKIVPCDFIAPAITHNPLSDHHQKLLSNFFAQTEALAFGKSREVVEQEYRDQGKDPATLDYVVPFKVFEGNRPTNSILLREITPFSLGALIALYEHKIFTQGVILNIFTFDQWGVELGKQLANRILPELKDDKEISSHDSSTNGLINRYKAWRG</sequence>
<reference key="1">
    <citation type="journal article" date="2009" name="PLoS Genet.">
        <title>Organised genome dynamics in the Escherichia coli species results in highly diverse adaptive paths.</title>
        <authorList>
            <person name="Touchon M."/>
            <person name="Hoede C."/>
            <person name="Tenaillon O."/>
            <person name="Barbe V."/>
            <person name="Baeriswyl S."/>
            <person name="Bidet P."/>
            <person name="Bingen E."/>
            <person name="Bonacorsi S."/>
            <person name="Bouchier C."/>
            <person name="Bouvet O."/>
            <person name="Calteau A."/>
            <person name="Chiapello H."/>
            <person name="Clermont O."/>
            <person name="Cruveiller S."/>
            <person name="Danchin A."/>
            <person name="Diard M."/>
            <person name="Dossat C."/>
            <person name="Karoui M.E."/>
            <person name="Frapy E."/>
            <person name="Garry L."/>
            <person name="Ghigo J.M."/>
            <person name="Gilles A.M."/>
            <person name="Johnson J."/>
            <person name="Le Bouguenec C."/>
            <person name="Lescat M."/>
            <person name="Mangenot S."/>
            <person name="Martinez-Jehanne V."/>
            <person name="Matic I."/>
            <person name="Nassif X."/>
            <person name="Oztas S."/>
            <person name="Petit M.A."/>
            <person name="Pichon C."/>
            <person name="Rouy Z."/>
            <person name="Ruf C.S."/>
            <person name="Schneider D."/>
            <person name="Tourret J."/>
            <person name="Vacherie B."/>
            <person name="Vallenet D."/>
            <person name="Medigue C."/>
            <person name="Rocha E.P.C."/>
            <person name="Denamur E."/>
        </authorList>
    </citation>
    <scope>NUCLEOTIDE SEQUENCE [LARGE SCALE GENOMIC DNA]</scope>
    <source>
        <strain>UMN026 / ExPEC</strain>
    </source>
</reference>
<protein>
    <recommendedName>
        <fullName evidence="1">Glucose-6-phosphate isomerase</fullName>
        <shortName evidence="1">GPI</shortName>
        <ecNumber evidence="1">5.3.1.9</ecNumber>
    </recommendedName>
    <alternativeName>
        <fullName evidence="1">Phosphoglucose isomerase</fullName>
        <shortName evidence="1">PGI</shortName>
    </alternativeName>
    <alternativeName>
        <fullName evidence="1">Phosphohexose isomerase</fullName>
        <shortName evidence="1">PHI</shortName>
    </alternativeName>
</protein>
<proteinExistence type="inferred from homology"/>
<name>G6PI_ECOLU</name>
<gene>
    <name evidence="1" type="primary">pgi</name>
    <name type="ordered locus">ECUMN_4558</name>
</gene>
<dbReference type="EC" id="5.3.1.9" evidence="1"/>
<dbReference type="EMBL" id="CU928163">
    <property type="protein sequence ID" value="CAR15675.1"/>
    <property type="molecule type" value="Genomic_DNA"/>
</dbReference>
<dbReference type="RefSeq" id="WP_000789993.1">
    <property type="nucleotide sequence ID" value="NC_011751.1"/>
</dbReference>
<dbReference type="RefSeq" id="YP_002415165.1">
    <property type="nucleotide sequence ID" value="NC_011751.1"/>
</dbReference>
<dbReference type="SMR" id="B7NFW8"/>
<dbReference type="STRING" id="585056.ECUMN_4558"/>
<dbReference type="KEGG" id="eum:ECUMN_4558"/>
<dbReference type="PATRIC" id="fig|585056.7.peg.4722"/>
<dbReference type="HOGENOM" id="CLU_017947_3_1_6"/>
<dbReference type="UniPathway" id="UPA00109">
    <property type="reaction ID" value="UER00181"/>
</dbReference>
<dbReference type="UniPathway" id="UPA00138"/>
<dbReference type="Proteomes" id="UP000007097">
    <property type="component" value="Chromosome"/>
</dbReference>
<dbReference type="GO" id="GO:0005829">
    <property type="term" value="C:cytosol"/>
    <property type="evidence" value="ECO:0007669"/>
    <property type="project" value="TreeGrafter"/>
</dbReference>
<dbReference type="GO" id="GO:0097367">
    <property type="term" value="F:carbohydrate derivative binding"/>
    <property type="evidence" value="ECO:0007669"/>
    <property type="project" value="InterPro"/>
</dbReference>
<dbReference type="GO" id="GO:0004347">
    <property type="term" value="F:glucose-6-phosphate isomerase activity"/>
    <property type="evidence" value="ECO:0007669"/>
    <property type="project" value="UniProtKB-UniRule"/>
</dbReference>
<dbReference type="GO" id="GO:0048029">
    <property type="term" value="F:monosaccharide binding"/>
    <property type="evidence" value="ECO:0007669"/>
    <property type="project" value="TreeGrafter"/>
</dbReference>
<dbReference type="GO" id="GO:0006094">
    <property type="term" value="P:gluconeogenesis"/>
    <property type="evidence" value="ECO:0007669"/>
    <property type="project" value="UniProtKB-UniRule"/>
</dbReference>
<dbReference type="GO" id="GO:0051156">
    <property type="term" value="P:glucose 6-phosphate metabolic process"/>
    <property type="evidence" value="ECO:0007669"/>
    <property type="project" value="TreeGrafter"/>
</dbReference>
<dbReference type="GO" id="GO:0006096">
    <property type="term" value="P:glycolytic process"/>
    <property type="evidence" value="ECO:0007669"/>
    <property type="project" value="UniProtKB-UniRule"/>
</dbReference>
<dbReference type="CDD" id="cd05015">
    <property type="entry name" value="SIS_PGI_1"/>
    <property type="match status" value="1"/>
</dbReference>
<dbReference type="CDD" id="cd05016">
    <property type="entry name" value="SIS_PGI_2"/>
    <property type="match status" value="1"/>
</dbReference>
<dbReference type="FunFam" id="1.10.1390.10:FF:000001">
    <property type="entry name" value="Glucose-6-phosphate isomerase"/>
    <property type="match status" value="1"/>
</dbReference>
<dbReference type="FunFam" id="3.40.50.10490:FF:000004">
    <property type="entry name" value="Glucose-6-phosphate isomerase"/>
    <property type="match status" value="1"/>
</dbReference>
<dbReference type="Gene3D" id="1.10.1390.10">
    <property type="match status" value="1"/>
</dbReference>
<dbReference type="Gene3D" id="3.40.50.10490">
    <property type="entry name" value="Glucose-6-phosphate isomerase like protein, domain 1"/>
    <property type="match status" value="2"/>
</dbReference>
<dbReference type="HAMAP" id="MF_00473">
    <property type="entry name" value="G6P_isomerase"/>
    <property type="match status" value="1"/>
</dbReference>
<dbReference type="InterPro" id="IPR001672">
    <property type="entry name" value="G6P_Isomerase"/>
</dbReference>
<dbReference type="InterPro" id="IPR023096">
    <property type="entry name" value="G6P_Isomerase_C"/>
</dbReference>
<dbReference type="InterPro" id="IPR018189">
    <property type="entry name" value="Phosphoglucose_isomerase_CS"/>
</dbReference>
<dbReference type="InterPro" id="IPR046348">
    <property type="entry name" value="SIS_dom_sf"/>
</dbReference>
<dbReference type="InterPro" id="IPR035476">
    <property type="entry name" value="SIS_PGI_1"/>
</dbReference>
<dbReference type="InterPro" id="IPR035482">
    <property type="entry name" value="SIS_PGI_2"/>
</dbReference>
<dbReference type="NCBIfam" id="NF001211">
    <property type="entry name" value="PRK00179.1"/>
    <property type="match status" value="1"/>
</dbReference>
<dbReference type="PANTHER" id="PTHR11469">
    <property type="entry name" value="GLUCOSE-6-PHOSPHATE ISOMERASE"/>
    <property type="match status" value="1"/>
</dbReference>
<dbReference type="PANTHER" id="PTHR11469:SF1">
    <property type="entry name" value="GLUCOSE-6-PHOSPHATE ISOMERASE"/>
    <property type="match status" value="1"/>
</dbReference>
<dbReference type="Pfam" id="PF00342">
    <property type="entry name" value="PGI"/>
    <property type="match status" value="1"/>
</dbReference>
<dbReference type="PRINTS" id="PR00662">
    <property type="entry name" value="G6PISOMERASE"/>
</dbReference>
<dbReference type="SUPFAM" id="SSF53697">
    <property type="entry name" value="SIS domain"/>
    <property type="match status" value="1"/>
</dbReference>
<dbReference type="PROSITE" id="PS00765">
    <property type="entry name" value="P_GLUCOSE_ISOMERASE_1"/>
    <property type="match status" value="1"/>
</dbReference>
<dbReference type="PROSITE" id="PS00174">
    <property type="entry name" value="P_GLUCOSE_ISOMERASE_2"/>
    <property type="match status" value="1"/>
</dbReference>
<dbReference type="PROSITE" id="PS51463">
    <property type="entry name" value="P_GLUCOSE_ISOMERASE_3"/>
    <property type="match status" value="1"/>
</dbReference>
<accession>B7NFW8</accession>
<keyword id="KW-0007">Acetylation</keyword>
<keyword id="KW-0963">Cytoplasm</keyword>
<keyword id="KW-0312">Gluconeogenesis</keyword>
<keyword id="KW-0324">Glycolysis</keyword>
<keyword id="KW-0413">Isomerase</keyword>
<feature type="chain" id="PRO_1000125721" description="Glucose-6-phosphate isomerase">
    <location>
        <begin position="1"/>
        <end position="549"/>
    </location>
</feature>
<feature type="active site" description="Proton donor" evidence="1">
    <location>
        <position position="355"/>
    </location>
</feature>
<feature type="active site" evidence="1">
    <location>
        <position position="386"/>
    </location>
</feature>
<feature type="active site" evidence="1">
    <location>
        <position position="514"/>
    </location>
</feature>
<feature type="modified residue" description="N6-acetyllysine" evidence="1">
    <location>
        <position position="80"/>
    </location>
</feature>
<feature type="modified residue" description="N6-acetyllysine" evidence="1">
    <location>
        <position position="228"/>
    </location>
</feature>
<feature type="modified residue" description="N6-acetyllysine" evidence="1">
    <location>
        <position position="234"/>
    </location>
</feature>
<comment type="function">
    <text evidence="1">Catalyzes the reversible isomerization of glucose-6-phosphate to fructose-6-phosphate.</text>
</comment>
<comment type="catalytic activity">
    <reaction evidence="1">
        <text>alpha-D-glucose 6-phosphate = beta-D-fructose 6-phosphate</text>
        <dbReference type="Rhea" id="RHEA:11816"/>
        <dbReference type="ChEBI" id="CHEBI:57634"/>
        <dbReference type="ChEBI" id="CHEBI:58225"/>
        <dbReference type="EC" id="5.3.1.9"/>
    </reaction>
</comment>
<comment type="pathway">
    <text evidence="1">Carbohydrate biosynthesis; gluconeogenesis.</text>
</comment>
<comment type="pathway">
    <text evidence="1">Carbohydrate degradation; glycolysis; D-glyceraldehyde 3-phosphate and glycerone phosphate from D-glucose: step 2/4.</text>
</comment>
<comment type="subcellular location">
    <subcellularLocation>
        <location evidence="1">Cytoplasm</location>
    </subcellularLocation>
</comment>
<comment type="similarity">
    <text evidence="1">Belongs to the GPI family.</text>
</comment>